<organism>
    <name type="scientific">Leishmania braziliensis</name>
    <dbReference type="NCBI Taxonomy" id="5660"/>
    <lineage>
        <taxon>Eukaryota</taxon>
        <taxon>Discoba</taxon>
        <taxon>Euglenozoa</taxon>
        <taxon>Kinetoplastea</taxon>
        <taxon>Metakinetoplastina</taxon>
        <taxon>Trypanosomatida</taxon>
        <taxon>Trypanosomatidae</taxon>
        <taxon>Leishmaniinae</taxon>
        <taxon>Leishmania</taxon>
        <taxon>Leishmania braziliensis species complex</taxon>
    </lineage>
</organism>
<comment type="function">
    <text evidence="1">Catalyzes the interconversion of methylthioribose-1-phosphate (MTR-1-P) into methylthioribulose-1-phosphate (MTRu-1-P).</text>
</comment>
<comment type="catalytic activity">
    <reaction evidence="1">
        <text>5-(methylsulfanyl)-alpha-D-ribose 1-phosphate = 5-(methylsulfanyl)-D-ribulose 1-phosphate</text>
        <dbReference type="Rhea" id="RHEA:19989"/>
        <dbReference type="ChEBI" id="CHEBI:58533"/>
        <dbReference type="ChEBI" id="CHEBI:58548"/>
        <dbReference type="EC" id="5.3.1.23"/>
    </reaction>
</comment>
<comment type="pathway">
    <text evidence="1">Amino-acid biosynthesis; L-methionine biosynthesis via salvage pathway; L-methionine from S-methyl-5-thio-alpha-D-ribose 1-phosphate: step 1/6.</text>
</comment>
<comment type="subcellular location">
    <subcellularLocation>
        <location evidence="1">Cytoplasm</location>
    </subcellularLocation>
    <subcellularLocation>
        <location evidence="1">Nucleus</location>
    </subcellularLocation>
</comment>
<comment type="similarity">
    <text evidence="1">Belongs to the eIF-2B alpha/beta/delta subunits family. MtnA subfamily.</text>
</comment>
<evidence type="ECO:0000255" key="1">
    <source>
        <dbReference type="HAMAP-Rule" id="MF_03119"/>
    </source>
</evidence>
<reference key="1">
    <citation type="journal article" date="2007" name="Nat. Genet.">
        <title>Comparative genomic analysis of three Leishmania species that cause diverse human disease.</title>
        <authorList>
            <person name="Peacock C.S."/>
            <person name="Seeger K."/>
            <person name="Harris D."/>
            <person name="Murphy L."/>
            <person name="Ruiz J.C."/>
            <person name="Quail M.A."/>
            <person name="Peters N."/>
            <person name="Adlem E."/>
            <person name="Tivey A."/>
            <person name="Aslett M."/>
            <person name="Kerhornou A."/>
            <person name="Ivens A."/>
            <person name="Fraser A."/>
            <person name="Rajandream M.-A."/>
            <person name="Carver T."/>
            <person name="Norbertczak H."/>
            <person name="Chillingworth T."/>
            <person name="Hance Z."/>
            <person name="Jagels K."/>
            <person name="Moule S."/>
            <person name="Ormond D."/>
            <person name="Rutter S."/>
            <person name="Sqaures R."/>
            <person name="Whitehead S."/>
            <person name="Rabbinowitsch E."/>
            <person name="Arrowsmith C."/>
            <person name="White B."/>
            <person name="Thurston S."/>
            <person name="Bringaud F."/>
            <person name="Baldauf S.L."/>
            <person name="Faulconbridge A."/>
            <person name="Jeffares D."/>
            <person name="Depledge D.P."/>
            <person name="Oyola S.O."/>
            <person name="Hilley J.D."/>
            <person name="Brito L.O."/>
            <person name="Tosi L.R.O."/>
            <person name="Barrell B."/>
            <person name="Cruz A.K."/>
            <person name="Mottram J.C."/>
            <person name="Smith D.F."/>
            <person name="Berriman M."/>
        </authorList>
    </citation>
    <scope>NUCLEOTIDE SEQUENCE [LARGE SCALE GENOMIC DNA]</scope>
    <source>
        <strain>MHOM/BR/75/M2904</strain>
    </source>
</reference>
<gene>
    <name type="ORF">LbrM35_V2.5180</name>
    <name type="ORF">LbrM_35_5180</name>
</gene>
<proteinExistence type="inferred from homology"/>
<sequence>MSRPHHATLESIKYTSGSLSLLDQSKLPLETVFHDVLTVEDIWSAIKEMRVRGAPAIAVSAALGIAVATQRKVDCGALKSGSEVQAFLLKSCDFVMASRPTAVNLFNCLRDLKAQVDKFDSTKPAGEVAKAFVELAEAVYAEDVGLNESIMRHGAAHILAAAKEYGREKVSILTICNTGALATSRYGTALGVVRQLFYDDKLEKVYACETRPWNQGARLTVYECVQEGIPCTLICDGAASSLMRSHKIDAVVVGADRICQNGDTANKIGTYNLAVLAKFHGVKFYVAASTKTLDAETASGDHVHIEEREPTEITTNMVTKQRVVVDGPHLSIWNPVFDITPGELITGGIITEKGVQGPAASTPHYDIASIVAQE</sequence>
<feature type="chain" id="PRO_0000401999" description="Methylthioribose-1-phosphate isomerase">
    <location>
        <begin position="1"/>
        <end position="374"/>
    </location>
</feature>
<feature type="active site" description="Proton donor" evidence="1">
    <location>
        <position position="256"/>
    </location>
</feature>
<feature type="site" description="Transition state stabilizer" evidence="1">
    <location>
        <position position="176"/>
    </location>
</feature>
<protein>
    <recommendedName>
        <fullName evidence="1">Methylthioribose-1-phosphate isomerase</fullName>
        <shortName evidence="1">M1Pi</shortName>
        <shortName evidence="1">MTR-1-P isomerase</shortName>
        <ecNumber evidence="1">5.3.1.23</ecNumber>
    </recommendedName>
    <alternativeName>
        <fullName evidence="1">S-methyl-5-thioribose-1-phosphate isomerase</fullName>
    </alternativeName>
    <alternativeName>
        <fullName evidence="1">Translation initiation factor eIF-2B subunit alpha/beta/delta-like protein</fullName>
    </alternativeName>
</protein>
<dbReference type="EC" id="5.3.1.23" evidence="1"/>
<dbReference type="EMBL" id="FR799010">
    <property type="protein sequence ID" value="CAM44270.1"/>
    <property type="molecule type" value="Genomic_DNA"/>
</dbReference>
<dbReference type="RefSeq" id="XP_001569135.1">
    <property type="nucleotide sequence ID" value="XM_001569085.2"/>
</dbReference>
<dbReference type="SMR" id="A4HQ10"/>
<dbReference type="FunCoup" id="A4HQ10">
    <property type="interactions" value="185"/>
</dbReference>
<dbReference type="STRING" id="5660.A4HQ10"/>
<dbReference type="GeneID" id="5420113"/>
<dbReference type="KEGG" id="lbz:LBRM_35_5180"/>
<dbReference type="VEuPathDB" id="TriTrypDB:LbrM.35.5180"/>
<dbReference type="InParanoid" id="A4HQ10"/>
<dbReference type="OMA" id="CETRPLN"/>
<dbReference type="UniPathway" id="UPA00904">
    <property type="reaction ID" value="UER00874"/>
</dbReference>
<dbReference type="Proteomes" id="UP000007258">
    <property type="component" value="Chromosome 36"/>
</dbReference>
<dbReference type="GO" id="GO:0005737">
    <property type="term" value="C:cytoplasm"/>
    <property type="evidence" value="ECO:0007669"/>
    <property type="project" value="UniProtKB-SubCell"/>
</dbReference>
<dbReference type="GO" id="GO:0005634">
    <property type="term" value="C:nucleus"/>
    <property type="evidence" value="ECO:0007669"/>
    <property type="project" value="UniProtKB-SubCell"/>
</dbReference>
<dbReference type="GO" id="GO:0046523">
    <property type="term" value="F:S-methyl-5-thioribose-1-phosphate isomerase activity"/>
    <property type="evidence" value="ECO:0007669"/>
    <property type="project" value="UniProtKB-UniRule"/>
</dbReference>
<dbReference type="GO" id="GO:0019509">
    <property type="term" value="P:L-methionine salvage from methylthioadenosine"/>
    <property type="evidence" value="ECO:0007669"/>
    <property type="project" value="UniProtKB-UniRule"/>
</dbReference>
<dbReference type="FunFam" id="1.20.120.420:FF:000003">
    <property type="entry name" value="Methylthioribose-1-phosphate isomerase"/>
    <property type="match status" value="1"/>
</dbReference>
<dbReference type="FunFam" id="3.40.50.10470:FF:000006">
    <property type="entry name" value="Methylthioribose-1-phosphate isomerase"/>
    <property type="match status" value="1"/>
</dbReference>
<dbReference type="Gene3D" id="1.20.120.420">
    <property type="entry name" value="translation initiation factor eif-2b, domain 1"/>
    <property type="match status" value="1"/>
</dbReference>
<dbReference type="Gene3D" id="3.40.50.10470">
    <property type="entry name" value="Translation initiation factor eif-2b, domain 2"/>
    <property type="match status" value="1"/>
</dbReference>
<dbReference type="HAMAP" id="MF_01678">
    <property type="entry name" value="Salvage_MtnA"/>
    <property type="match status" value="1"/>
</dbReference>
<dbReference type="InterPro" id="IPR000649">
    <property type="entry name" value="IF-2B-related"/>
</dbReference>
<dbReference type="InterPro" id="IPR005251">
    <property type="entry name" value="IF-M1Pi"/>
</dbReference>
<dbReference type="InterPro" id="IPR042529">
    <property type="entry name" value="IF_2B-like_C"/>
</dbReference>
<dbReference type="InterPro" id="IPR011559">
    <property type="entry name" value="Initiation_fac_2B_a/b/d"/>
</dbReference>
<dbReference type="InterPro" id="IPR027363">
    <property type="entry name" value="M1Pi_N"/>
</dbReference>
<dbReference type="InterPro" id="IPR037171">
    <property type="entry name" value="NagB/RpiA_transferase-like"/>
</dbReference>
<dbReference type="NCBIfam" id="TIGR00524">
    <property type="entry name" value="eIF-2B_rel"/>
    <property type="match status" value="1"/>
</dbReference>
<dbReference type="NCBIfam" id="NF004326">
    <property type="entry name" value="PRK05720.1"/>
    <property type="match status" value="1"/>
</dbReference>
<dbReference type="NCBIfam" id="TIGR00512">
    <property type="entry name" value="salvage_mtnA"/>
    <property type="match status" value="1"/>
</dbReference>
<dbReference type="PANTHER" id="PTHR43475">
    <property type="entry name" value="METHYLTHIORIBOSE-1-PHOSPHATE ISOMERASE"/>
    <property type="match status" value="1"/>
</dbReference>
<dbReference type="PANTHER" id="PTHR43475:SF1">
    <property type="entry name" value="METHYLTHIORIBOSE-1-PHOSPHATE ISOMERASE"/>
    <property type="match status" value="1"/>
</dbReference>
<dbReference type="Pfam" id="PF01008">
    <property type="entry name" value="IF-2B"/>
    <property type="match status" value="1"/>
</dbReference>
<dbReference type="SUPFAM" id="SSF100950">
    <property type="entry name" value="NagB/RpiA/CoA transferase-like"/>
    <property type="match status" value="1"/>
</dbReference>
<name>MTNA_LEIBR</name>
<keyword id="KW-0028">Amino-acid biosynthesis</keyword>
<keyword id="KW-0963">Cytoplasm</keyword>
<keyword id="KW-0413">Isomerase</keyword>
<keyword id="KW-0486">Methionine biosynthesis</keyword>
<keyword id="KW-0539">Nucleus</keyword>
<keyword id="KW-1185">Reference proteome</keyword>
<accession>A4HQ10</accession>